<name>ATPA_PORPU</name>
<organism>
    <name type="scientific">Porphyra purpurea</name>
    <name type="common">Red seaweed</name>
    <name type="synonym">Ulva purpurea</name>
    <dbReference type="NCBI Taxonomy" id="2787"/>
    <lineage>
        <taxon>Eukaryota</taxon>
        <taxon>Rhodophyta</taxon>
        <taxon>Bangiophyceae</taxon>
        <taxon>Bangiales</taxon>
        <taxon>Bangiaceae</taxon>
        <taxon>Porphyra</taxon>
    </lineage>
</organism>
<comment type="function">
    <text evidence="1">Produces ATP from ADP in the presence of a proton gradient across the membrane. The alpha chain is a regulatory subunit.</text>
</comment>
<comment type="catalytic activity">
    <reaction evidence="1">
        <text>ATP + H2O + 4 H(+)(in) = ADP + phosphate + 5 H(+)(out)</text>
        <dbReference type="Rhea" id="RHEA:57720"/>
        <dbReference type="ChEBI" id="CHEBI:15377"/>
        <dbReference type="ChEBI" id="CHEBI:15378"/>
        <dbReference type="ChEBI" id="CHEBI:30616"/>
        <dbReference type="ChEBI" id="CHEBI:43474"/>
        <dbReference type="ChEBI" id="CHEBI:456216"/>
        <dbReference type="EC" id="7.1.2.2"/>
    </reaction>
</comment>
<comment type="subunit">
    <text evidence="1">F-type ATPases have 2 components, CF(1) - the catalytic core - and CF(0) - the membrane proton channel. CF(1) has five subunits: alpha(3), beta(3), gamma(1), delta(1), epsilon(1). CF(0) has four main subunits: a, b, b' and c.</text>
</comment>
<comment type="subcellular location">
    <subcellularLocation>
        <location evidence="1">Plastid</location>
        <location evidence="1">Chloroplast thylakoid membrane</location>
        <topology evidence="1">Peripheral membrane protein</topology>
    </subcellularLocation>
</comment>
<comment type="similarity">
    <text evidence="1">Belongs to the ATPase alpha/beta chains family.</text>
</comment>
<evidence type="ECO:0000255" key="1">
    <source>
        <dbReference type="HAMAP-Rule" id="MF_01346"/>
    </source>
</evidence>
<dbReference type="EC" id="7.1.2.2" evidence="1"/>
<dbReference type="EMBL" id="U38804">
    <property type="protein sequence ID" value="AAC08128.1"/>
    <property type="molecule type" value="Genomic_DNA"/>
</dbReference>
<dbReference type="PIR" id="S73163">
    <property type="entry name" value="S73163"/>
</dbReference>
<dbReference type="RefSeq" id="NP_053852.1">
    <property type="nucleotide sequence ID" value="NC_000925.1"/>
</dbReference>
<dbReference type="SMR" id="P51242"/>
<dbReference type="GeneID" id="809871"/>
<dbReference type="GO" id="GO:0009535">
    <property type="term" value="C:chloroplast thylakoid membrane"/>
    <property type="evidence" value="ECO:0007669"/>
    <property type="project" value="UniProtKB-SubCell"/>
</dbReference>
<dbReference type="GO" id="GO:0045259">
    <property type="term" value="C:proton-transporting ATP synthase complex"/>
    <property type="evidence" value="ECO:0007669"/>
    <property type="project" value="UniProtKB-KW"/>
</dbReference>
<dbReference type="GO" id="GO:0043531">
    <property type="term" value="F:ADP binding"/>
    <property type="evidence" value="ECO:0007669"/>
    <property type="project" value="TreeGrafter"/>
</dbReference>
<dbReference type="GO" id="GO:0005524">
    <property type="term" value="F:ATP binding"/>
    <property type="evidence" value="ECO:0007669"/>
    <property type="project" value="UniProtKB-UniRule"/>
</dbReference>
<dbReference type="GO" id="GO:0046933">
    <property type="term" value="F:proton-transporting ATP synthase activity, rotational mechanism"/>
    <property type="evidence" value="ECO:0007669"/>
    <property type="project" value="UniProtKB-UniRule"/>
</dbReference>
<dbReference type="CDD" id="cd18113">
    <property type="entry name" value="ATP-synt_F1_alpha_C"/>
    <property type="match status" value="1"/>
</dbReference>
<dbReference type="CDD" id="cd18116">
    <property type="entry name" value="ATP-synt_F1_alpha_N"/>
    <property type="match status" value="1"/>
</dbReference>
<dbReference type="CDD" id="cd01132">
    <property type="entry name" value="F1-ATPase_alpha_CD"/>
    <property type="match status" value="1"/>
</dbReference>
<dbReference type="FunFam" id="1.20.150.20:FF:000001">
    <property type="entry name" value="ATP synthase subunit alpha"/>
    <property type="match status" value="1"/>
</dbReference>
<dbReference type="FunFam" id="2.40.30.20:FF:000001">
    <property type="entry name" value="ATP synthase subunit alpha"/>
    <property type="match status" value="1"/>
</dbReference>
<dbReference type="FunFam" id="3.40.50.300:FF:000002">
    <property type="entry name" value="ATP synthase subunit alpha"/>
    <property type="match status" value="1"/>
</dbReference>
<dbReference type="Gene3D" id="2.40.30.20">
    <property type="match status" value="1"/>
</dbReference>
<dbReference type="Gene3D" id="1.20.150.20">
    <property type="entry name" value="ATP synthase alpha/beta chain, C-terminal domain"/>
    <property type="match status" value="1"/>
</dbReference>
<dbReference type="Gene3D" id="3.40.50.300">
    <property type="entry name" value="P-loop containing nucleotide triphosphate hydrolases"/>
    <property type="match status" value="1"/>
</dbReference>
<dbReference type="HAMAP" id="MF_01346">
    <property type="entry name" value="ATP_synth_alpha_bact"/>
    <property type="match status" value="1"/>
</dbReference>
<dbReference type="InterPro" id="IPR023366">
    <property type="entry name" value="ATP_synth_asu-like_sf"/>
</dbReference>
<dbReference type="InterPro" id="IPR000793">
    <property type="entry name" value="ATP_synth_asu_C"/>
</dbReference>
<dbReference type="InterPro" id="IPR038376">
    <property type="entry name" value="ATP_synth_asu_C_sf"/>
</dbReference>
<dbReference type="InterPro" id="IPR033732">
    <property type="entry name" value="ATP_synth_F1_a_nt-bd_dom"/>
</dbReference>
<dbReference type="InterPro" id="IPR005294">
    <property type="entry name" value="ATP_synth_F1_asu"/>
</dbReference>
<dbReference type="InterPro" id="IPR020003">
    <property type="entry name" value="ATPase_a/bsu_AS"/>
</dbReference>
<dbReference type="InterPro" id="IPR004100">
    <property type="entry name" value="ATPase_F1/V1/A1_a/bsu_N"/>
</dbReference>
<dbReference type="InterPro" id="IPR036121">
    <property type="entry name" value="ATPase_F1/V1/A1_a/bsu_N_sf"/>
</dbReference>
<dbReference type="InterPro" id="IPR000194">
    <property type="entry name" value="ATPase_F1/V1/A1_a/bsu_nucl-bd"/>
</dbReference>
<dbReference type="InterPro" id="IPR027417">
    <property type="entry name" value="P-loop_NTPase"/>
</dbReference>
<dbReference type="NCBIfam" id="TIGR00962">
    <property type="entry name" value="atpA"/>
    <property type="match status" value="1"/>
</dbReference>
<dbReference type="NCBIfam" id="NF009884">
    <property type="entry name" value="PRK13343.1"/>
    <property type="match status" value="1"/>
</dbReference>
<dbReference type="PANTHER" id="PTHR48082">
    <property type="entry name" value="ATP SYNTHASE SUBUNIT ALPHA, MITOCHONDRIAL"/>
    <property type="match status" value="1"/>
</dbReference>
<dbReference type="PANTHER" id="PTHR48082:SF2">
    <property type="entry name" value="ATP SYNTHASE SUBUNIT ALPHA, MITOCHONDRIAL"/>
    <property type="match status" value="1"/>
</dbReference>
<dbReference type="Pfam" id="PF00006">
    <property type="entry name" value="ATP-synt_ab"/>
    <property type="match status" value="1"/>
</dbReference>
<dbReference type="Pfam" id="PF00306">
    <property type="entry name" value="ATP-synt_ab_C"/>
    <property type="match status" value="1"/>
</dbReference>
<dbReference type="Pfam" id="PF02874">
    <property type="entry name" value="ATP-synt_ab_N"/>
    <property type="match status" value="1"/>
</dbReference>
<dbReference type="PIRSF" id="PIRSF039088">
    <property type="entry name" value="F_ATPase_subunit_alpha"/>
    <property type="match status" value="1"/>
</dbReference>
<dbReference type="SUPFAM" id="SSF47917">
    <property type="entry name" value="C-terminal domain of alpha and beta subunits of F1 ATP synthase"/>
    <property type="match status" value="1"/>
</dbReference>
<dbReference type="SUPFAM" id="SSF50615">
    <property type="entry name" value="N-terminal domain of alpha and beta subunits of F1 ATP synthase"/>
    <property type="match status" value="1"/>
</dbReference>
<dbReference type="SUPFAM" id="SSF52540">
    <property type="entry name" value="P-loop containing nucleoside triphosphate hydrolases"/>
    <property type="match status" value="1"/>
</dbReference>
<dbReference type="PROSITE" id="PS00152">
    <property type="entry name" value="ATPASE_ALPHA_BETA"/>
    <property type="match status" value="1"/>
</dbReference>
<reference key="1">
    <citation type="journal article" date="1995" name="Plant Mol. Biol. Rep.">
        <title>Complete nucleotide sequence of the Porphyra purpurea chloroplast genome.</title>
        <authorList>
            <person name="Reith M.E."/>
            <person name="Munholland J."/>
        </authorList>
    </citation>
    <scope>NUCLEOTIDE SEQUENCE [LARGE SCALE GENOMIC DNA]</scope>
    <source>
        <strain>Avonport</strain>
    </source>
</reference>
<gene>
    <name evidence="1" type="primary">atpA</name>
</gene>
<geneLocation type="chloroplast"/>
<sequence length="504" mass="54305">MVNIRPDEISSIIRQQIEKYDQDVEVANIGTVLQVGDGIARVYGLDEVMAGELLEFEDKTIGVALNLESDNVGVVLMGDGRDILEGSSVKGTGKIAQIPVGDAFLGRVVDPLARPIDNKGEPASNGTRLIESMAPGIIGRQSVCEPMQTGITAIDSMIPIGRGQRELIIGDRQTGKTAVALDTIINQKGQDVVCVYVAIGQKASSVAQVVSSLQEKGALDYTIIVTANADSPATLQYIAPYTGAALAEYFMYKGKATLVIYDDLTKQAQAYRQMSLLLRRPPGREAYPGDVFYLHSRLLERAAKLNSDLGGGSMTALPIIETQAGDVSAYIPTNVISITDGQIFLSGDLFNSGIRPAINVGISVSRVGSAAQIKAMKQVAGKLKLELAQFAELEAFSQFASDLDKATQNQLARGQRLREILKQAQNSPIPVEEQTAIIYTGINGYLDDIAVNKVPDFIIKLREDLKNSKPEFGESIRSSKKLDTASEELLKKAIEDVKQGFVKA</sequence>
<keyword id="KW-0066">ATP synthesis</keyword>
<keyword id="KW-0067">ATP-binding</keyword>
<keyword id="KW-0139">CF(1)</keyword>
<keyword id="KW-0150">Chloroplast</keyword>
<keyword id="KW-0375">Hydrogen ion transport</keyword>
<keyword id="KW-0406">Ion transport</keyword>
<keyword id="KW-0472">Membrane</keyword>
<keyword id="KW-0547">Nucleotide-binding</keyword>
<keyword id="KW-0934">Plastid</keyword>
<keyword id="KW-0793">Thylakoid</keyword>
<keyword id="KW-1278">Translocase</keyword>
<keyword id="KW-0813">Transport</keyword>
<accession>P51242</accession>
<proteinExistence type="inferred from homology"/>
<feature type="chain" id="PRO_0000144391" description="ATP synthase subunit alpha, chloroplastic">
    <location>
        <begin position="1"/>
        <end position="504"/>
    </location>
</feature>
<feature type="binding site" evidence="1">
    <location>
        <begin position="170"/>
        <end position="177"/>
    </location>
    <ligand>
        <name>ATP</name>
        <dbReference type="ChEBI" id="CHEBI:30616"/>
    </ligand>
</feature>
<feature type="site" description="Required for activity" evidence="1">
    <location>
        <position position="363"/>
    </location>
</feature>
<protein>
    <recommendedName>
        <fullName evidence="1">ATP synthase subunit alpha, chloroplastic</fullName>
        <ecNumber evidence="1">7.1.2.2</ecNumber>
    </recommendedName>
    <alternativeName>
        <fullName evidence="1">ATP synthase F1 sector subunit alpha</fullName>
    </alternativeName>
    <alternativeName>
        <fullName evidence="1">F-ATPase subunit alpha</fullName>
    </alternativeName>
</protein>